<organismHost>
    <name type="scientific">Enterobacteriaceae</name>
    <dbReference type="NCBI Taxonomy" id="543"/>
</organismHost>
<dbReference type="EMBL" id="AF083977">
    <property type="protein sequence ID" value="AAF01103.1"/>
    <property type="molecule type" value="Genomic_DNA"/>
</dbReference>
<dbReference type="RefSeq" id="NP_050629.1">
    <property type="nucleotide sequence ID" value="NC_000929.1"/>
</dbReference>
<dbReference type="SMR" id="Q9T1W9"/>
<dbReference type="TCDB" id="1.E.66.1.1">
    <property type="family name" value="the phage mu holin-like releasin (releasin) family"/>
</dbReference>
<dbReference type="GeneID" id="2636263"/>
<dbReference type="KEGG" id="vg:2636263"/>
<dbReference type="Proteomes" id="UP000002611">
    <property type="component" value="Genome"/>
</dbReference>
<dbReference type="GO" id="GO:0020002">
    <property type="term" value="C:host cell plasma membrane"/>
    <property type="evidence" value="ECO:0007669"/>
    <property type="project" value="UniProtKB-SubCell"/>
</dbReference>
<dbReference type="GO" id="GO:0016020">
    <property type="term" value="C:membrane"/>
    <property type="evidence" value="ECO:0007669"/>
    <property type="project" value="UniProtKB-KW"/>
</dbReference>
<dbReference type="GO" id="GO:0044659">
    <property type="term" value="P:viral release from host cell by cytolysis"/>
    <property type="evidence" value="ECO:0000314"/>
    <property type="project" value="UniProtKB"/>
</dbReference>
<dbReference type="Gene3D" id="1.20.1270.70">
    <property type="entry name" value="Designed single chain three-helix bundle"/>
    <property type="match status" value="1"/>
</dbReference>
<dbReference type="InterPro" id="IPR020269">
    <property type="entry name" value="Phage_Mu_Releasin"/>
</dbReference>
<dbReference type="Pfam" id="PF10805">
    <property type="entry name" value="DUF2730"/>
    <property type="match status" value="1"/>
</dbReference>
<feature type="chain" id="PRO_0000077818" description="Releasin protein">
    <location>
        <begin position="1"/>
        <end position="99"/>
    </location>
</feature>
<feature type="transmembrane region" description="Helical" evidence="1">
    <location>
        <begin position="3"/>
        <end position="23"/>
    </location>
</feature>
<accession>Q9T1W9</accession>
<sequence>MDLISVLALWPYLLPVVAGGAVWAMRRSFASTERVERLENRMTEMETRYASIPGTEDVHEMRLRIAELSGDIRVLSQRVQSFSHQLELLLENAVNRSNS</sequence>
<name>RLEAS_BPMU</name>
<organism>
    <name type="scientific">Escherichia phage Mu</name>
    <name type="common">Bacteriophage Mu</name>
    <dbReference type="NCBI Taxonomy" id="2681603"/>
    <lineage>
        <taxon>Viruses</taxon>
        <taxon>Duplodnaviria</taxon>
        <taxon>Heunggongvirae</taxon>
        <taxon>Uroviricota</taxon>
        <taxon>Caudoviricetes</taxon>
        <taxon>Muvirus</taxon>
        <taxon>Muvirus mu</taxon>
    </lineage>
</organism>
<protein>
    <recommendedName>
        <fullName>Releasin protein</fullName>
    </recommendedName>
    <alternativeName>
        <fullName>Gene product 25</fullName>
        <shortName>gp25</shortName>
    </alternativeName>
</protein>
<reference key="1">
    <citation type="journal article" date="2002" name="J. Mol. Biol.">
        <title>Bacteriophage Mu genome sequence: analysis and comparison with Mu-like prophages in Haemophilus, Neisseria and Deinococcus.</title>
        <authorList>
            <person name="Morgan G.J."/>
            <person name="Hatfull G.F."/>
            <person name="Casjens S."/>
            <person name="Hendrix R.W."/>
        </authorList>
    </citation>
    <scope>NUCLEOTIDE SEQUENCE [LARGE SCALE GENOMIC DNA]</scope>
</reference>
<reference key="2">
    <citation type="journal article" date="1993" name="Genetics">
        <title>Mutational analysis of a C-dependent late promoter of bacteriophage Mu.</title>
        <authorList>
            <person name="Chiang L.W."/>
            <person name="Howe M.M."/>
        </authorList>
    </citation>
    <scope>INDUCTION</scope>
</reference>
<reference key="3">
    <citation type="journal article" date="2022" name="MBio">
        <title>Endolysin Regulation in Phage Mu Lysis.</title>
        <authorList>
            <person name="Chamblee J.S."/>
            <person name="Ramsey J."/>
            <person name="Chen Y."/>
            <person name="Maddox L.T."/>
            <person name="Ross C."/>
            <person name="To K.H."/>
            <person name="Cahill J.L."/>
            <person name="Young R."/>
        </authorList>
    </citation>
    <scope>FUNCTION</scope>
</reference>
<keyword id="KW-0204">Cytolysis</keyword>
<keyword id="KW-1030">Host cell inner membrane</keyword>
<keyword id="KW-0578">Host cell lysis by virus</keyword>
<keyword id="KW-1032">Host cell membrane</keyword>
<keyword id="KW-1043">Host membrane</keyword>
<keyword id="KW-0426">Late protein</keyword>
<keyword id="KW-0472">Membrane</keyword>
<keyword id="KW-1185">Reference proteome</keyword>
<keyword id="KW-0812">Transmembrane</keyword>
<keyword id="KW-1133">Transmembrane helix</keyword>
<keyword id="KW-1188">Viral release from host cell</keyword>
<comment type="function">
    <text evidence="2">Facilitates the release of the SAR-endolysin.</text>
</comment>
<comment type="subcellular location">
    <subcellularLocation>
        <location evidence="4">Host cell inner membrane</location>
        <topology evidence="4">Single-pass type I membrane protein</topology>
    </subcellularLocation>
</comment>
<comment type="induction">
    <text evidence="3">Expressed in the late phase of the viral replicative cycle. Expression of late genes is activated by the viral late transcription activator C.</text>
</comment>
<evidence type="ECO:0000255" key="1"/>
<evidence type="ECO:0000269" key="2">
    <source>
    </source>
</evidence>
<evidence type="ECO:0000269" key="3">
    <source>
    </source>
</evidence>
<evidence type="ECO:0000305" key="4"/>
<gene>
    <name type="ordered locus">Mup25</name>
</gene>
<proteinExistence type="evidence at transcript level"/>